<dbReference type="EC" id="6.3.4.4" evidence="1"/>
<dbReference type="EMBL" id="CP001063">
    <property type="protein sequence ID" value="ACD09024.1"/>
    <property type="molecule type" value="Genomic_DNA"/>
</dbReference>
<dbReference type="RefSeq" id="WP_000527955.1">
    <property type="nucleotide sequence ID" value="NC_010658.1"/>
</dbReference>
<dbReference type="SMR" id="B2TY52"/>
<dbReference type="STRING" id="344609.SbBS512_E4708"/>
<dbReference type="GeneID" id="75202411"/>
<dbReference type="KEGG" id="sbc:SbBS512_E4708"/>
<dbReference type="HOGENOM" id="CLU_029848_0_0_6"/>
<dbReference type="UniPathway" id="UPA00075">
    <property type="reaction ID" value="UER00335"/>
</dbReference>
<dbReference type="Proteomes" id="UP000001030">
    <property type="component" value="Chromosome"/>
</dbReference>
<dbReference type="GO" id="GO:0005737">
    <property type="term" value="C:cytoplasm"/>
    <property type="evidence" value="ECO:0007669"/>
    <property type="project" value="UniProtKB-SubCell"/>
</dbReference>
<dbReference type="GO" id="GO:0004019">
    <property type="term" value="F:adenylosuccinate synthase activity"/>
    <property type="evidence" value="ECO:0007669"/>
    <property type="project" value="UniProtKB-UniRule"/>
</dbReference>
<dbReference type="GO" id="GO:0005525">
    <property type="term" value="F:GTP binding"/>
    <property type="evidence" value="ECO:0007669"/>
    <property type="project" value="UniProtKB-UniRule"/>
</dbReference>
<dbReference type="GO" id="GO:0000287">
    <property type="term" value="F:magnesium ion binding"/>
    <property type="evidence" value="ECO:0007669"/>
    <property type="project" value="UniProtKB-UniRule"/>
</dbReference>
<dbReference type="GO" id="GO:0044208">
    <property type="term" value="P:'de novo' AMP biosynthetic process"/>
    <property type="evidence" value="ECO:0007669"/>
    <property type="project" value="UniProtKB-UniRule"/>
</dbReference>
<dbReference type="GO" id="GO:0046040">
    <property type="term" value="P:IMP metabolic process"/>
    <property type="evidence" value="ECO:0007669"/>
    <property type="project" value="TreeGrafter"/>
</dbReference>
<dbReference type="CDD" id="cd03108">
    <property type="entry name" value="AdSS"/>
    <property type="match status" value="1"/>
</dbReference>
<dbReference type="FunFam" id="1.10.300.10:FF:000001">
    <property type="entry name" value="Adenylosuccinate synthetase"/>
    <property type="match status" value="1"/>
</dbReference>
<dbReference type="FunFam" id="3.90.170.10:FF:000001">
    <property type="entry name" value="Adenylosuccinate synthetase"/>
    <property type="match status" value="1"/>
</dbReference>
<dbReference type="Gene3D" id="3.40.440.10">
    <property type="entry name" value="Adenylosuccinate Synthetase, subunit A, domain 1"/>
    <property type="match status" value="1"/>
</dbReference>
<dbReference type="Gene3D" id="1.10.300.10">
    <property type="entry name" value="Adenylosuccinate Synthetase, subunit A, domain 2"/>
    <property type="match status" value="1"/>
</dbReference>
<dbReference type="Gene3D" id="3.90.170.10">
    <property type="entry name" value="Adenylosuccinate Synthetase, subunit A, domain 3"/>
    <property type="match status" value="1"/>
</dbReference>
<dbReference type="HAMAP" id="MF_00011">
    <property type="entry name" value="Adenylosucc_synth"/>
    <property type="match status" value="1"/>
</dbReference>
<dbReference type="InterPro" id="IPR018220">
    <property type="entry name" value="Adenylosuccin_syn_GTP-bd"/>
</dbReference>
<dbReference type="InterPro" id="IPR033128">
    <property type="entry name" value="Adenylosuccin_syn_Lys_AS"/>
</dbReference>
<dbReference type="InterPro" id="IPR042109">
    <property type="entry name" value="Adenylosuccinate_synth_dom1"/>
</dbReference>
<dbReference type="InterPro" id="IPR042110">
    <property type="entry name" value="Adenylosuccinate_synth_dom2"/>
</dbReference>
<dbReference type="InterPro" id="IPR042111">
    <property type="entry name" value="Adenylosuccinate_synth_dom3"/>
</dbReference>
<dbReference type="InterPro" id="IPR001114">
    <property type="entry name" value="Adenylosuccinate_synthetase"/>
</dbReference>
<dbReference type="InterPro" id="IPR027417">
    <property type="entry name" value="P-loop_NTPase"/>
</dbReference>
<dbReference type="NCBIfam" id="NF002223">
    <property type="entry name" value="PRK01117.1"/>
    <property type="match status" value="1"/>
</dbReference>
<dbReference type="NCBIfam" id="TIGR00184">
    <property type="entry name" value="purA"/>
    <property type="match status" value="1"/>
</dbReference>
<dbReference type="PANTHER" id="PTHR11846">
    <property type="entry name" value="ADENYLOSUCCINATE SYNTHETASE"/>
    <property type="match status" value="1"/>
</dbReference>
<dbReference type="PANTHER" id="PTHR11846:SF0">
    <property type="entry name" value="ADENYLOSUCCINATE SYNTHETASE"/>
    <property type="match status" value="1"/>
</dbReference>
<dbReference type="Pfam" id="PF00709">
    <property type="entry name" value="Adenylsucc_synt"/>
    <property type="match status" value="1"/>
</dbReference>
<dbReference type="SMART" id="SM00788">
    <property type="entry name" value="Adenylsucc_synt"/>
    <property type="match status" value="1"/>
</dbReference>
<dbReference type="SUPFAM" id="SSF52540">
    <property type="entry name" value="P-loop containing nucleoside triphosphate hydrolases"/>
    <property type="match status" value="1"/>
</dbReference>
<dbReference type="PROSITE" id="PS01266">
    <property type="entry name" value="ADENYLOSUCCIN_SYN_1"/>
    <property type="match status" value="1"/>
</dbReference>
<dbReference type="PROSITE" id="PS00513">
    <property type="entry name" value="ADENYLOSUCCIN_SYN_2"/>
    <property type="match status" value="1"/>
</dbReference>
<proteinExistence type="inferred from homology"/>
<organism>
    <name type="scientific">Shigella boydii serotype 18 (strain CDC 3083-94 / BS512)</name>
    <dbReference type="NCBI Taxonomy" id="344609"/>
    <lineage>
        <taxon>Bacteria</taxon>
        <taxon>Pseudomonadati</taxon>
        <taxon>Pseudomonadota</taxon>
        <taxon>Gammaproteobacteria</taxon>
        <taxon>Enterobacterales</taxon>
        <taxon>Enterobacteriaceae</taxon>
        <taxon>Shigella</taxon>
    </lineage>
</organism>
<comment type="function">
    <text evidence="1">Plays an important role in the de novo pathway of purine nucleotide biosynthesis. Catalyzes the first committed step in the biosynthesis of AMP from IMP.</text>
</comment>
<comment type="catalytic activity">
    <reaction evidence="1">
        <text>IMP + L-aspartate + GTP = N(6)-(1,2-dicarboxyethyl)-AMP + GDP + phosphate + 2 H(+)</text>
        <dbReference type="Rhea" id="RHEA:15753"/>
        <dbReference type="ChEBI" id="CHEBI:15378"/>
        <dbReference type="ChEBI" id="CHEBI:29991"/>
        <dbReference type="ChEBI" id="CHEBI:37565"/>
        <dbReference type="ChEBI" id="CHEBI:43474"/>
        <dbReference type="ChEBI" id="CHEBI:57567"/>
        <dbReference type="ChEBI" id="CHEBI:58053"/>
        <dbReference type="ChEBI" id="CHEBI:58189"/>
        <dbReference type="EC" id="6.3.4.4"/>
    </reaction>
</comment>
<comment type="cofactor">
    <cofactor evidence="1">
        <name>Mg(2+)</name>
        <dbReference type="ChEBI" id="CHEBI:18420"/>
    </cofactor>
    <text evidence="1">Binds 1 Mg(2+) ion per subunit.</text>
</comment>
<comment type="pathway">
    <text evidence="1">Purine metabolism; AMP biosynthesis via de novo pathway; AMP from IMP: step 1/2.</text>
</comment>
<comment type="subunit">
    <text evidence="1">Homodimer.</text>
</comment>
<comment type="subcellular location">
    <subcellularLocation>
        <location evidence="1">Cytoplasm</location>
    </subcellularLocation>
</comment>
<comment type="similarity">
    <text evidence="1">Belongs to the adenylosuccinate synthetase family.</text>
</comment>
<accession>B2TY52</accession>
<sequence length="432" mass="47345">MGNNVVVLGTQWGDEGKGKIVDLLTERAKYVVRYQGGHNAGHTLVINGEKTVLHLIPSGILRENVTSIIGNGVVLSPAALMKEMKELEDRGIPVRERLLLSEACPLILDYHVALDNAREKARGAKAIGTTGRGIGPAYEDKVARRGLRVGDLFDKETFAEKLKEVMEYHNFQLVNYYKAEAVDYQKVLDDTMAVADILTSMVVDVSDLLDQARQRGDFVMFEGAQGTLLDIDHGTYPYVTSSNTTAGGVATGSGLGPRYVDYVLGILKAYSTRVGAGPFPTELFDETGEFLCKQGNEFGATTGRRRRTGWLDTVAVRRAVQLNSLSGFCLTKLDVLDGLKEVKLCVAYRMPDGREVTTTPLAADDWKGVEPIYETMPGWSESTFGVKDRSGLPQAALNYIKRIEELTGVPIDIISTGPDRTETMILRDPFDA</sequence>
<keyword id="KW-0963">Cytoplasm</keyword>
<keyword id="KW-0342">GTP-binding</keyword>
<keyword id="KW-0436">Ligase</keyword>
<keyword id="KW-0460">Magnesium</keyword>
<keyword id="KW-0479">Metal-binding</keyword>
<keyword id="KW-0547">Nucleotide-binding</keyword>
<keyword id="KW-0658">Purine biosynthesis</keyword>
<keyword id="KW-1185">Reference proteome</keyword>
<gene>
    <name evidence="1" type="primary">purA</name>
    <name type="ordered locus">SbBS512_E4708</name>
</gene>
<protein>
    <recommendedName>
        <fullName evidence="1">Adenylosuccinate synthetase</fullName>
        <shortName evidence="1">AMPSase</shortName>
        <shortName evidence="1">AdSS</shortName>
        <ecNumber evidence="1">6.3.4.4</ecNumber>
    </recommendedName>
    <alternativeName>
        <fullName evidence="1">IMP--aspartate ligase</fullName>
    </alternativeName>
</protein>
<reference key="1">
    <citation type="submission" date="2008-05" db="EMBL/GenBank/DDBJ databases">
        <title>Complete sequence of Shigella boydii serotype 18 strain BS512.</title>
        <authorList>
            <person name="Rasko D.A."/>
            <person name="Rosovitz M."/>
            <person name="Maurelli A.T."/>
            <person name="Myers G."/>
            <person name="Seshadri R."/>
            <person name="Cer R."/>
            <person name="Jiang L."/>
            <person name="Ravel J."/>
            <person name="Sebastian Y."/>
        </authorList>
    </citation>
    <scope>NUCLEOTIDE SEQUENCE [LARGE SCALE GENOMIC DNA]</scope>
    <source>
        <strain>CDC 3083-94 / BS512</strain>
    </source>
</reference>
<name>PURA_SHIB3</name>
<evidence type="ECO:0000255" key="1">
    <source>
        <dbReference type="HAMAP-Rule" id="MF_00011"/>
    </source>
</evidence>
<feature type="chain" id="PRO_1000089341" description="Adenylosuccinate synthetase">
    <location>
        <begin position="1"/>
        <end position="432"/>
    </location>
</feature>
<feature type="active site" description="Proton acceptor" evidence="1">
    <location>
        <position position="14"/>
    </location>
</feature>
<feature type="active site" description="Proton donor" evidence="1">
    <location>
        <position position="42"/>
    </location>
</feature>
<feature type="binding site" evidence="1">
    <location>
        <begin position="13"/>
        <end position="19"/>
    </location>
    <ligand>
        <name>GTP</name>
        <dbReference type="ChEBI" id="CHEBI:37565"/>
    </ligand>
</feature>
<feature type="binding site" description="in other chain" evidence="1">
    <location>
        <begin position="14"/>
        <end position="17"/>
    </location>
    <ligand>
        <name>IMP</name>
        <dbReference type="ChEBI" id="CHEBI:58053"/>
        <note>ligand shared between dimeric partners</note>
    </ligand>
</feature>
<feature type="binding site" evidence="1">
    <location>
        <position position="14"/>
    </location>
    <ligand>
        <name>Mg(2+)</name>
        <dbReference type="ChEBI" id="CHEBI:18420"/>
    </ligand>
</feature>
<feature type="binding site" description="in other chain" evidence="1">
    <location>
        <begin position="39"/>
        <end position="42"/>
    </location>
    <ligand>
        <name>IMP</name>
        <dbReference type="ChEBI" id="CHEBI:58053"/>
        <note>ligand shared between dimeric partners</note>
    </ligand>
</feature>
<feature type="binding site" evidence="1">
    <location>
        <begin position="41"/>
        <end position="43"/>
    </location>
    <ligand>
        <name>GTP</name>
        <dbReference type="ChEBI" id="CHEBI:37565"/>
    </ligand>
</feature>
<feature type="binding site" evidence="1">
    <location>
        <position position="41"/>
    </location>
    <ligand>
        <name>Mg(2+)</name>
        <dbReference type="ChEBI" id="CHEBI:18420"/>
    </ligand>
</feature>
<feature type="binding site" description="in other chain" evidence="1">
    <location>
        <position position="130"/>
    </location>
    <ligand>
        <name>IMP</name>
        <dbReference type="ChEBI" id="CHEBI:58053"/>
        <note>ligand shared between dimeric partners</note>
    </ligand>
</feature>
<feature type="binding site" evidence="1">
    <location>
        <position position="144"/>
    </location>
    <ligand>
        <name>IMP</name>
        <dbReference type="ChEBI" id="CHEBI:58053"/>
        <note>ligand shared between dimeric partners</note>
    </ligand>
</feature>
<feature type="binding site" description="in other chain" evidence="1">
    <location>
        <position position="225"/>
    </location>
    <ligand>
        <name>IMP</name>
        <dbReference type="ChEBI" id="CHEBI:58053"/>
        <note>ligand shared between dimeric partners</note>
    </ligand>
</feature>
<feature type="binding site" description="in other chain" evidence="1">
    <location>
        <position position="240"/>
    </location>
    <ligand>
        <name>IMP</name>
        <dbReference type="ChEBI" id="CHEBI:58053"/>
        <note>ligand shared between dimeric partners</note>
    </ligand>
</feature>
<feature type="binding site" evidence="1">
    <location>
        <begin position="300"/>
        <end position="306"/>
    </location>
    <ligand>
        <name>substrate</name>
    </ligand>
</feature>
<feature type="binding site" description="in other chain" evidence="1">
    <location>
        <position position="304"/>
    </location>
    <ligand>
        <name>IMP</name>
        <dbReference type="ChEBI" id="CHEBI:58053"/>
        <note>ligand shared between dimeric partners</note>
    </ligand>
</feature>
<feature type="binding site" evidence="1">
    <location>
        <position position="306"/>
    </location>
    <ligand>
        <name>GTP</name>
        <dbReference type="ChEBI" id="CHEBI:37565"/>
    </ligand>
</feature>
<feature type="binding site" evidence="1">
    <location>
        <begin position="332"/>
        <end position="334"/>
    </location>
    <ligand>
        <name>GTP</name>
        <dbReference type="ChEBI" id="CHEBI:37565"/>
    </ligand>
</feature>
<feature type="binding site" evidence="1">
    <location>
        <begin position="415"/>
        <end position="417"/>
    </location>
    <ligand>
        <name>GTP</name>
        <dbReference type="ChEBI" id="CHEBI:37565"/>
    </ligand>
</feature>